<organism>
    <name type="scientific">Oryza sativa subsp. japonica</name>
    <name type="common">Rice</name>
    <dbReference type="NCBI Taxonomy" id="39947"/>
    <lineage>
        <taxon>Eukaryota</taxon>
        <taxon>Viridiplantae</taxon>
        <taxon>Streptophyta</taxon>
        <taxon>Embryophyta</taxon>
        <taxon>Tracheophyta</taxon>
        <taxon>Spermatophyta</taxon>
        <taxon>Magnoliopsida</taxon>
        <taxon>Liliopsida</taxon>
        <taxon>Poales</taxon>
        <taxon>Poaceae</taxon>
        <taxon>BOP clade</taxon>
        <taxon>Oryzoideae</taxon>
        <taxon>Oryzeae</taxon>
        <taxon>Oryzinae</taxon>
        <taxon>Oryza</taxon>
        <taxon>Oryza sativa</taxon>
    </lineage>
</organism>
<feature type="chain" id="PRO_0000410881" description="Putative potassium channel KAT5">
    <location>
        <begin position="1"/>
        <end position="368"/>
    </location>
</feature>
<feature type="transmembrane region" description="Helical" evidence="2">
    <location>
        <begin position="33"/>
        <end position="53"/>
    </location>
</feature>
<feature type="transmembrane region" description="Helical" evidence="2">
    <location>
        <begin position="97"/>
        <end position="117"/>
    </location>
</feature>
<feature type="transmembrane region" description="Helical" evidence="2">
    <location>
        <begin position="132"/>
        <end position="152"/>
    </location>
</feature>
<feature type="intramembrane region" description="Pore-forming" evidence="2">
    <location>
        <begin position="180"/>
        <end position="199"/>
    </location>
</feature>
<feature type="transmembrane region" description="Helical" evidence="2">
    <location>
        <begin position="206"/>
        <end position="226"/>
    </location>
</feature>
<feature type="binding site">
    <location>
        <begin position="225"/>
        <end position="344"/>
    </location>
    <ligand>
        <name>a nucleoside 3',5'-cyclic phosphate</name>
        <dbReference type="ChEBI" id="CHEBI:58464"/>
    </ligand>
</feature>
<comment type="function">
    <text evidence="1">Putative inward-rectifying potassium channel.</text>
</comment>
<comment type="subcellular location">
    <subcellularLocation>
        <location evidence="3">Membrane</location>
        <topology evidence="3">Multi-pass membrane protein</topology>
    </subcellularLocation>
</comment>
<comment type="similarity">
    <text evidence="3">Belongs to the potassium channel family. Plant (TC 1.A.1.4) subfamily.</text>
</comment>
<reference key="1">
    <citation type="journal article" date="2002" name="Nature">
        <title>Sequence and analysis of rice chromosome 4.</title>
        <authorList>
            <person name="Feng Q."/>
            <person name="Zhang Y."/>
            <person name="Hao P."/>
            <person name="Wang S."/>
            <person name="Fu G."/>
            <person name="Huang Y."/>
            <person name="Li Y."/>
            <person name="Zhu J."/>
            <person name="Liu Y."/>
            <person name="Hu X."/>
            <person name="Jia P."/>
            <person name="Zhang Y."/>
            <person name="Zhao Q."/>
            <person name="Ying K."/>
            <person name="Yu S."/>
            <person name="Tang Y."/>
            <person name="Weng Q."/>
            <person name="Zhang L."/>
            <person name="Lu Y."/>
            <person name="Mu J."/>
            <person name="Lu Y."/>
            <person name="Zhang L.S."/>
            <person name="Yu Z."/>
            <person name="Fan D."/>
            <person name="Liu X."/>
            <person name="Lu T."/>
            <person name="Li C."/>
            <person name="Wu Y."/>
            <person name="Sun T."/>
            <person name="Lei H."/>
            <person name="Li T."/>
            <person name="Hu H."/>
            <person name="Guan J."/>
            <person name="Wu M."/>
            <person name="Zhang R."/>
            <person name="Zhou B."/>
            <person name="Chen Z."/>
            <person name="Chen L."/>
            <person name="Jin Z."/>
            <person name="Wang R."/>
            <person name="Yin H."/>
            <person name="Cai Z."/>
            <person name="Ren S."/>
            <person name="Lv G."/>
            <person name="Gu W."/>
            <person name="Zhu G."/>
            <person name="Tu Y."/>
            <person name="Jia J."/>
            <person name="Zhang Y."/>
            <person name="Chen J."/>
            <person name="Kang H."/>
            <person name="Chen X."/>
            <person name="Shao C."/>
            <person name="Sun Y."/>
            <person name="Hu Q."/>
            <person name="Zhang X."/>
            <person name="Zhang W."/>
            <person name="Wang L."/>
            <person name="Ding C."/>
            <person name="Sheng H."/>
            <person name="Gu J."/>
            <person name="Chen S."/>
            <person name="Ni L."/>
            <person name="Zhu F."/>
            <person name="Chen W."/>
            <person name="Lan L."/>
            <person name="Lai Y."/>
            <person name="Cheng Z."/>
            <person name="Gu M."/>
            <person name="Jiang J."/>
            <person name="Li J."/>
            <person name="Hong G."/>
            <person name="Xue Y."/>
            <person name="Han B."/>
        </authorList>
    </citation>
    <scope>NUCLEOTIDE SEQUENCE [LARGE SCALE GENOMIC DNA]</scope>
    <source>
        <strain>cv. Nipponbare</strain>
    </source>
</reference>
<reference key="2">
    <citation type="journal article" date="2005" name="Nature">
        <title>The map-based sequence of the rice genome.</title>
        <authorList>
            <consortium name="International rice genome sequencing project (IRGSP)"/>
        </authorList>
    </citation>
    <scope>NUCLEOTIDE SEQUENCE [LARGE SCALE GENOMIC DNA]</scope>
    <source>
        <strain>cv. Nipponbare</strain>
    </source>
</reference>
<reference key="3">
    <citation type="journal article" date="2013" name="Rice">
        <title>Improvement of the Oryza sativa Nipponbare reference genome using next generation sequence and optical map data.</title>
        <authorList>
            <person name="Kawahara Y."/>
            <person name="de la Bastide M."/>
            <person name="Hamilton J.P."/>
            <person name="Kanamori H."/>
            <person name="McCombie W.R."/>
            <person name="Ouyang S."/>
            <person name="Schwartz D.C."/>
            <person name="Tanaka T."/>
            <person name="Wu J."/>
            <person name="Zhou S."/>
            <person name="Childs K.L."/>
            <person name="Davidson R.M."/>
            <person name="Lin H."/>
            <person name="Quesada-Ocampo L."/>
            <person name="Vaillancourt B."/>
            <person name="Sakai H."/>
            <person name="Lee S.S."/>
            <person name="Kim J."/>
            <person name="Numa H."/>
            <person name="Itoh T."/>
            <person name="Buell C.R."/>
            <person name="Matsumoto T."/>
        </authorList>
    </citation>
    <scope>GENOME REANNOTATION</scope>
    <source>
        <strain>cv. Nipponbare</strain>
    </source>
</reference>
<reference key="4">
    <citation type="journal article" date="2005" name="PLoS Biol.">
        <title>The genomes of Oryza sativa: a history of duplications.</title>
        <authorList>
            <person name="Yu J."/>
            <person name="Wang J."/>
            <person name="Lin W."/>
            <person name="Li S."/>
            <person name="Li H."/>
            <person name="Zhou J."/>
            <person name="Ni P."/>
            <person name="Dong W."/>
            <person name="Hu S."/>
            <person name="Zeng C."/>
            <person name="Zhang J."/>
            <person name="Zhang Y."/>
            <person name="Li R."/>
            <person name="Xu Z."/>
            <person name="Li S."/>
            <person name="Li X."/>
            <person name="Zheng H."/>
            <person name="Cong L."/>
            <person name="Lin L."/>
            <person name="Yin J."/>
            <person name="Geng J."/>
            <person name="Li G."/>
            <person name="Shi J."/>
            <person name="Liu J."/>
            <person name="Lv H."/>
            <person name="Li J."/>
            <person name="Wang J."/>
            <person name="Deng Y."/>
            <person name="Ran L."/>
            <person name="Shi X."/>
            <person name="Wang X."/>
            <person name="Wu Q."/>
            <person name="Li C."/>
            <person name="Ren X."/>
            <person name="Wang J."/>
            <person name="Wang X."/>
            <person name="Li D."/>
            <person name="Liu D."/>
            <person name="Zhang X."/>
            <person name="Ji Z."/>
            <person name="Zhao W."/>
            <person name="Sun Y."/>
            <person name="Zhang Z."/>
            <person name="Bao J."/>
            <person name="Han Y."/>
            <person name="Dong L."/>
            <person name="Ji J."/>
            <person name="Chen P."/>
            <person name="Wu S."/>
            <person name="Liu J."/>
            <person name="Xiao Y."/>
            <person name="Bu D."/>
            <person name="Tan J."/>
            <person name="Yang L."/>
            <person name="Ye C."/>
            <person name="Zhang J."/>
            <person name="Xu J."/>
            <person name="Zhou Y."/>
            <person name="Yu Y."/>
            <person name="Zhang B."/>
            <person name="Zhuang S."/>
            <person name="Wei H."/>
            <person name="Liu B."/>
            <person name="Lei M."/>
            <person name="Yu H."/>
            <person name="Li Y."/>
            <person name="Xu H."/>
            <person name="Wei S."/>
            <person name="He X."/>
            <person name="Fang L."/>
            <person name="Zhang Z."/>
            <person name="Zhang Y."/>
            <person name="Huang X."/>
            <person name="Su Z."/>
            <person name="Tong W."/>
            <person name="Li J."/>
            <person name="Tong Z."/>
            <person name="Li S."/>
            <person name="Ye J."/>
            <person name="Wang L."/>
            <person name="Fang L."/>
            <person name="Lei T."/>
            <person name="Chen C.-S."/>
            <person name="Chen H.-C."/>
            <person name="Xu Z."/>
            <person name="Li H."/>
            <person name="Huang H."/>
            <person name="Zhang F."/>
            <person name="Xu H."/>
            <person name="Li N."/>
            <person name="Zhao C."/>
            <person name="Li S."/>
            <person name="Dong L."/>
            <person name="Huang Y."/>
            <person name="Li L."/>
            <person name="Xi Y."/>
            <person name="Qi Q."/>
            <person name="Li W."/>
            <person name="Zhang B."/>
            <person name="Hu W."/>
            <person name="Zhang Y."/>
            <person name="Tian X."/>
            <person name="Jiao Y."/>
            <person name="Liang X."/>
            <person name="Jin J."/>
            <person name="Gao L."/>
            <person name="Zheng W."/>
            <person name="Hao B."/>
            <person name="Liu S.-M."/>
            <person name="Wang W."/>
            <person name="Yuan L."/>
            <person name="Cao M."/>
            <person name="McDermott J."/>
            <person name="Samudrala R."/>
            <person name="Wang J."/>
            <person name="Wong G.K.-S."/>
            <person name="Yang H."/>
        </authorList>
    </citation>
    <scope>NUCLEOTIDE SEQUENCE [LARGE SCALE GENOMIC DNA]</scope>
    <source>
        <strain>cv. Nipponbare</strain>
    </source>
</reference>
<proteinExistence type="inferred from homology"/>
<keyword id="KW-0407">Ion channel</keyword>
<keyword id="KW-0406">Ion transport</keyword>
<keyword id="KW-0472">Membrane</keyword>
<keyword id="KW-0630">Potassium</keyword>
<keyword id="KW-0631">Potassium channel</keyword>
<keyword id="KW-0633">Potassium transport</keyword>
<keyword id="KW-1185">Reference proteome</keyword>
<keyword id="KW-0812">Transmembrane</keyword>
<keyword id="KW-1133">Transmembrane helix</keyword>
<keyword id="KW-0813">Transport</keyword>
<keyword id="KW-0851">Voltage-gated channel</keyword>
<protein>
    <recommendedName>
        <fullName>Putative potassium channel KAT5</fullName>
    </recommendedName>
</protein>
<name>KAT5_ORYSJ</name>
<evidence type="ECO:0000250" key="1"/>
<evidence type="ECO:0000255" key="2"/>
<evidence type="ECO:0000305" key="3"/>
<gene>
    <name type="ordered locus">Os04g0117500</name>
    <name type="ordered locus">LOC_Os04g02720</name>
    <name type="ORF">OsJ_13587</name>
    <name type="ORF">OSJNBb0050O03.14</name>
</gene>
<sequence>MAARSELLRSAFGKASPSLGWFIVNPHRYSYRWWHMFLIMLVLYSAWASPFELSMEKAASIALVVIRPSGRCLLRHRHCHILLRHLVTGKRQGLWGLLNLLRLWRLRCASKLFARVEKDVRFSYLWTRLIKLLCVTLFALHFAACIYLWMVFNYKIKELTWIGSQIHSFEDRSVWFCYTCAVYWSITTLATVGYGDLHATNIGEMLFSIAFMLFNMGLTSYIIGNITNLVVRETSNTFKMRDMVQWVSEFGSMNRLPEVMREQMLANGQLRFRTKEQLQHEHVKRIGPRGMVGEIGVMFSIPQPFTIRSRRLTQVVRISHIHLLQAVRPNTADGCIVFSNFILVSDFVEYLESLKVQTKEVAFVSGHL</sequence>
<dbReference type="EMBL" id="AL606631">
    <property type="protein sequence ID" value="CAE01724.2"/>
    <property type="molecule type" value="Genomic_DNA"/>
</dbReference>
<dbReference type="EMBL" id="AP014960">
    <property type="status" value="NOT_ANNOTATED_CDS"/>
    <property type="molecule type" value="Genomic_DNA"/>
</dbReference>
<dbReference type="EMBL" id="CM000141">
    <property type="protein sequence ID" value="EAZ29513.1"/>
    <property type="molecule type" value="Genomic_DNA"/>
</dbReference>
<dbReference type="SMR" id="Q7XT08"/>
<dbReference type="FunCoup" id="Q7XT08">
    <property type="interactions" value="594"/>
</dbReference>
<dbReference type="STRING" id="39947.Q7XT08"/>
<dbReference type="PaxDb" id="39947-Q7XT08"/>
<dbReference type="InParanoid" id="Q7XT08"/>
<dbReference type="Proteomes" id="UP000000763">
    <property type="component" value="Chromosome 4"/>
</dbReference>
<dbReference type="Proteomes" id="UP000007752">
    <property type="component" value="Chromosome 4"/>
</dbReference>
<dbReference type="Proteomes" id="UP000059680">
    <property type="component" value="Chromosome 4"/>
</dbReference>
<dbReference type="GO" id="GO:0034702">
    <property type="term" value="C:monoatomic ion channel complex"/>
    <property type="evidence" value="ECO:0007669"/>
    <property type="project" value="UniProtKB-KW"/>
</dbReference>
<dbReference type="GO" id="GO:0005249">
    <property type="term" value="F:voltage-gated potassium channel activity"/>
    <property type="evidence" value="ECO:0007669"/>
    <property type="project" value="InterPro"/>
</dbReference>
<dbReference type="Gene3D" id="1.10.287.70">
    <property type="match status" value="1"/>
</dbReference>
<dbReference type="InterPro" id="IPR000595">
    <property type="entry name" value="cNMP-bd_dom"/>
</dbReference>
<dbReference type="InterPro" id="IPR018490">
    <property type="entry name" value="cNMP-bd_dom_sf"/>
</dbReference>
<dbReference type="InterPro" id="IPR005821">
    <property type="entry name" value="Ion_trans_dom"/>
</dbReference>
<dbReference type="InterPro" id="IPR045319">
    <property type="entry name" value="KAT/AKT"/>
</dbReference>
<dbReference type="PANTHER" id="PTHR45743">
    <property type="entry name" value="POTASSIUM CHANNEL AKT1"/>
    <property type="match status" value="1"/>
</dbReference>
<dbReference type="PANTHER" id="PTHR45743:SF27">
    <property type="entry name" value="POTASSIUM CHANNEL KAT3"/>
    <property type="match status" value="1"/>
</dbReference>
<dbReference type="Pfam" id="PF00520">
    <property type="entry name" value="Ion_trans"/>
    <property type="match status" value="1"/>
</dbReference>
<dbReference type="SUPFAM" id="SSF51206">
    <property type="entry name" value="cAMP-binding domain-like"/>
    <property type="match status" value="1"/>
</dbReference>
<dbReference type="SUPFAM" id="SSF81324">
    <property type="entry name" value="Voltage-gated potassium channels"/>
    <property type="match status" value="1"/>
</dbReference>
<dbReference type="PROSITE" id="PS50042">
    <property type="entry name" value="CNMP_BINDING_3"/>
    <property type="match status" value="1"/>
</dbReference>
<accession>Q7XT08</accession>